<sequence length="572" mass="61936">MQSSMLLRVRALPKTASVLSRTKTATYATYKVPRIDNEPNKHYAAGSPDRKALQEALARTQRNAPLSVPLVIAGKEVKSSSSLTQSNPASHGPVATYSNATAKDVQAAIESALEARKSWASTPFADRASVFLKAADLISTKYRYDVMALTMHGQGKNAWQAEIDSAAELCDFFRFGVKYAEDLYAQQPVHHAPGVWNRVEYRPLEGFVYAISPFNFTAIGGNLAGAPALMGNVVVWKPSPSAIASNWLVHQILLEAGLPKNVIQFVPGEAEEVTKTVLDHPDFAALHFTGSTNVFRNLYGQISTRVAAGKYRSYPRIVGETGGKNFHLIHKSADIRNAAVQTVRGAFEYQGQKCSATSRVYVASSIADSFLEQVASEAKSLKVGPPSDFTNFCGPVIHEASFTKLAKVIDEAKNDPELELLAGGSYDSSKGWYIQPTVYRTTNPDHPLLTRELFGPILVVYAYPDATEADFARIAQKIDATGEYGLTGSVFAQDREALAVANDVLRNAAGNFYINCKSTGAVVGQQPFGGARASGTNDKAGSGNLLSRFVSLRSIKEEFVPTYKVAYPSNEA</sequence>
<evidence type="ECO:0000250" key="1"/>
<evidence type="ECO:0000255" key="2"/>
<evidence type="ECO:0000255" key="3">
    <source>
        <dbReference type="PROSITE-ProRule" id="PRU10007"/>
    </source>
</evidence>
<evidence type="ECO:0000255" key="4">
    <source>
        <dbReference type="PROSITE-ProRule" id="PRU10008"/>
    </source>
</evidence>
<evidence type="ECO:0000305" key="5"/>
<feature type="transit peptide" description="Mitochondrion" evidence="2">
    <location>
        <begin position="1"/>
        <end status="unknown"/>
    </location>
</feature>
<feature type="chain" id="PRO_0000007176" description="Delta-1-pyrroline-5-carboxylate dehydrogenase, mitochondrial">
    <location>
        <begin status="unknown"/>
        <end position="572"/>
    </location>
</feature>
<feature type="active site" description="Proton acceptor" evidence="3 4">
    <location>
        <position position="320"/>
    </location>
</feature>
<feature type="active site" description="Nucleophile" evidence="3 4">
    <location>
        <position position="354"/>
    </location>
</feature>
<feature type="binding site" evidence="1">
    <location>
        <begin position="300"/>
        <end position="305"/>
    </location>
    <ligand>
        <name>NAD(+)</name>
        <dbReference type="ChEBI" id="CHEBI:57540"/>
    </ligand>
</feature>
<feature type="site" description="Transition state stabilizer" evidence="1">
    <location>
        <position position="215"/>
    </location>
</feature>
<feature type="sequence conflict" description="In Ref. 1; AAF72527." evidence="5" ref="1">
    <original>L</original>
    <variation>V</variation>
    <location>
        <position position="149"/>
    </location>
</feature>
<gene>
    <name type="primary">prnC</name>
    <name type="ORF">AN1733</name>
</gene>
<reference key="1">
    <citation type="submission" date="2000-04" db="EMBL/GenBank/DDBJ databases">
        <title>Primary structure of the nuclear prnC gene involved in the mitochondrial pathway for proline utilization in Aspergillus nidulans.</title>
        <authorList>
            <person name="Demais S."/>
            <person name="Gavrias V."/>
            <person name="Scazzocchio C."/>
        </authorList>
    </citation>
    <scope>NUCLEOTIDE SEQUENCE [GENOMIC DNA]</scope>
</reference>
<reference key="2">
    <citation type="journal article" date="2005" name="Nature">
        <title>Sequencing of Aspergillus nidulans and comparative analysis with A. fumigatus and A. oryzae.</title>
        <authorList>
            <person name="Galagan J.E."/>
            <person name="Calvo S.E."/>
            <person name="Cuomo C."/>
            <person name="Ma L.-J."/>
            <person name="Wortman J.R."/>
            <person name="Batzoglou S."/>
            <person name="Lee S.-I."/>
            <person name="Bastuerkmen M."/>
            <person name="Spevak C.C."/>
            <person name="Clutterbuck J."/>
            <person name="Kapitonov V."/>
            <person name="Jurka J."/>
            <person name="Scazzocchio C."/>
            <person name="Farman M.L."/>
            <person name="Butler J."/>
            <person name="Purcell S."/>
            <person name="Harris S."/>
            <person name="Braus G.H."/>
            <person name="Draht O."/>
            <person name="Busch S."/>
            <person name="D'Enfert C."/>
            <person name="Bouchier C."/>
            <person name="Goldman G.H."/>
            <person name="Bell-Pedersen D."/>
            <person name="Griffiths-Jones S."/>
            <person name="Doonan J.H."/>
            <person name="Yu J."/>
            <person name="Vienken K."/>
            <person name="Pain A."/>
            <person name="Freitag M."/>
            <person name="Selker E.U."/>
            <person name="Archer D.B."/>
            <person name="Penalva M.A."/>
            <person name="Oakley B.R."/>
            <person name="Momany M."/>
            <person name="Tanaka T."/>
            <person name="Kumagai T."/>
            <person name="Asai K."/>
            <person name="Machida M."/>
            <person name="Nierman W.C."/>
            <person name="Denning D.W."/>
            <person name="Caddick M.X."/>
            <person name="Hynes M."/>
            <person name="Paoletti M."/>
            <person name="Fischer R."/>
            <person name="Miller B.L."/>
            <person name="Dyer P.S."/>
            <person name="Sachs M.S."/>
            <person name="Osmani S.A."/>
            <person name="Birren B.W."/>
        </authorList>
    </citation>
    <scope>NUCLEOTIDE SEQUENCE [LARGE SCALE GENOMIC DNA]</scope>
    <source>
        <strain>FGSC A4 / ATCC 38163 / CBS 112.46 / NRRL 194 / M139</strain>
    </source>
</reference>
<reference key="3">
    <citation type="journal article" date="2009" name="Fungal Genet. Biol.">
        <title>The 2008 update of the Aspergillus nidulans genome annotation: a community effort.</title>
        <authorList>
            <person name="Wortman J.R."/>
            <person name="Gilsenan J.M."/>
            <person name="Joardar V."/>
            <person name="Deegan J."/>
            <person name="Clutterbuck J."/>
            <person name="Andersen M.R."/>
            <person name="Archer D."/>
            <person name="Bencina M."/>
            <person name="Braus G."/>
            <person name="Coutinho P."/>
            <person name="von Dohren H."/>
            <person name="Doonan J."/>
            <person name="Driessen A.J."/>
            <person name="Durek P."/>
            <person name="Espeso E."/>
            <person name="Fekete E."/>
            <person name="Flipphi M."/>
            <person name="Estrada C.G."/>
            <person name="Geysens S."/>
            <person name="Goldman G."/>
            <person name="de Groot P.W."/>
            <person name="Hansen K."/>
            <person name="Harris S.D."/>
            <person name="Heinekamp T."/>
            <person name="Helmstaedt K."/>
            <person name="Henrissat B."/>
            <person name="Hofmann G."/>
            <person name="Homan T."/>
            <person name="Horio T."/>
            <person name="Horiuchi H."/>
            <person name="James S."/>
            <person name="Jones M."/>
            <person name="Karaffa L."/>
            <person name="Karanyi Z."/>
            <person name="Kato M."/>
            <person name="Keller N."/>
            <person name="Kelly D.E."/>
            <person name="Kiel J.A."/>
            <person name="Kim J.M."/>
            <person name="van der Klei I.J."/>
            <person name="Klis F.M."/>
            <person name="Kovalchuk A."/>
            <person name="Krasevec N."/>
            <person name="Kubicek C.P."/>
            <person name="Liu B."/>
            <person name="Maccabe A."/>
            <person name="Meyer V."/>
            <person name="Mirabito P."/>
            <person name="Miskei M."/>
            <person name="Mos M."/>
            <person name="Mullins J."/>
            <person name="Nelson D.R."/>
            <person name="Nielsen J."/>
            <person name="Oakley B.R."/>
            <person name="Osmani S.A."/>
            <person name="Pakula T."/>
            <person name="Paszewski A."/>
            <person name="Paulsen I."/>
            <person name="Pilsyk S."/>
            <person name="Pocsi I."/>
            <person name="Punt P.J."/>
            <person name="Ram A.F."/>
            <person name="Ren Q."/>
            <person name="Robellet X."/>
            <person name="Robson G."/>
            <person name="Seiboth B."/>
            <person name="van Solingen P."/>
            <person name="Specht T."/>
            <person name="Sun J."/>
            <person name="Taheri-Talesh N."/>
            <person name="Takeshita N."/>
            <person name="Ussery D."/>
            <person name="vanKuyk P.A."/>
            <person name="Visser H."/>
            <person name="van de Vondervoort P.J."/>
            <person name="de Vries R.P."/>
            <person name="Walton J."/>
            <person name="Xiang X."/>
            <person name="Xiong Y."/>
            <person name="Zeng A.P."/>
            <person name="Brandt B.W."/>
            <person name="Cornell M.J."/>
            <person name="van den Hondel C.A."/>
            <person name="Visser J."/>
            <person name="Oliver S.G."/>
            <person name="Turner G."/>
        </authorList>
    </citation>
    <scope>GENOME REANNOTATION</scope>
    <source>
        <strain>FGSC A4 / ATCC 38163 / CBS 112.46 / NRRL 194 / M139</strain>
    </source>
</reference>
<dbReference type="EC" id="1.2.1.88"/>
<dbReference type="EMBL" id="AF252630">
    <property type="protein sequence ID" value="AAF72527.1"/>
    <property type="molecule type" value="Genomic_DNA"/>
</dbReference>
<dbReference type="EMBL" id="AACD01000027">
    <property type="protein sequence ID" value="EAA64019.1"/>
    <property type="molecule type" value="Genomic_DNA"/>
</dbReference>
<dbReference type="EMBL" id="BN001307">
    <property type="protein sequence ID" value="CBF85458.1"/>
    <property type="molecule type" value="Genomic_DNA"/>
</dbReference>
<dbReference type="RefSeq" id="XP_659337.1">
    <property type="nucleotide sequence ID" value="XM_654245.1"/>
</dbReference>
<dbReference type="SMR" id="Q9P8I0"/>
<dbReference type="FunCoup" id="Q9P8I0">
    <property type="interactions" value="378"/>
</dbReference>
<dbReference type="STRING" id="227321.Q9P8I0"/>
<dbReference type="EnsemblFungi" id="CBF85458">
    <property type="protein sequence ID" value="CBF85458"/>
    <property type="gene ID" value="ANIA_01733"/>
</dbReference>
<dbReference type="KEGG" id="ani:ANIA_01733"/>
<dbReference type="VEuPathDB" id="FungiDB:AN1733"/>
<dbReference type="eggNOG" id="KOG2455">
    <property type="taxonomic scope" value="Eukaryota"/>
</dbReference>
<dbReference type="HOGENOM" id="CLU_005391_4_1_1"/>
<dbReference type="InParanoid" id="Q9P8I0"/>
<dbReference type="OMA" id="FAGIHFT"/>
<dbReference type="OrthoDB" id="5322683at2759"/>
<dbReference type="UniPathway" id="UPA00261">
    <property type="reaction ID" value="UER00374"/>
</dbReference>
<dbReference type="Proteomes" id="UP000000560">
    <property type="component" value="Chromosome VII"/>
</dbReference>
<dbReference type="GO" id="GO:0005759">
    <property type="term" value="C:mitochondrial matrix"/>
    <property type="evidence" value="ECO:0000318"/>
    <property type="project" value="GO_Central"/>
</dbReference>
<dbReference type="GO" id="GO:0003842">
    <property type="term" value="F:1-pyrroline-5-carboxylate dehydrogenase activity"/>
    <property type="evidence" value="ECO:0000318"/>
    <property type="project" value="GO_Central"/>
</dbReference>
<dbReference type="GO" id="GO:0034198">
    <property type="term" value="P:cellular response to amino acid starvation"/>
    <property type="evidence" value="ECO:0000270"/>
    <property type="project" value="AspGD"/>
</dbReference>
<dbReference type="GO" id="GO:0010133">
    <property type="term" value="P:proline catabolic process to glutamate"/>
    <property type="evidence" value="ECO:0000318"/>
    <property type="project" value="GO_Central"/>
</dbReference>
<dbReference type="CDD" id="cd07123">
    <property type="entry name" value="ALDH_F4-17_P5CDH"/>
    <property type="match status" value="1"/>
</dbReference>
<dbReference type="FunFam" id="3.40.605.10:FF:000006">
    <property type="entry name" value="1-pyrroline-5-carboxylate dehydrogenase"/>
    <property type="match status" value="1"/>
</dbReference>
<dbReference type="FunFam" id="3.40.309.10:FF:000005">
    <property type="entry name" value="1-pyrroline-5-carboxylate dehydrogenase 1"/>
    <property type="match status" value="1"/>
</dbReference>
<dbReference type="Gene3D" id="3.40.605.10">
    <property type="entry name" value="Aldehyde Dehydrogenase, Chain A, domain 1"/>
    <property type="match status" value="1"/>
</dbReference>
<dbReference type="Gene3D" id="3.40.309.10">
    <property type="entry name" value="Aldehyde Dehydrogenase, Chain A, domain 2"/>
    <property type="match status" value="1"/>
</dbReference>
<dbReference type="InterPro" id="IPR016161">
    <property type="entry name" value="Ald_DH/histidinol_DH"/>
</dbReference>
<dbReference type="InterPro" id="IPR016163">
    <property type="entry name" value="Ald_DH_C"/>
</dbReference>
<dbReference type="InterPro" id="IPR016160">
    <property type="entry name" value="Ald_DH_CS_CYS"/>
</dbReference>
<dbReference type="InterPro" id="IPR029510">
    <property type="entry name" value="Ald_DH_CS_GLU"/>
</dbReference>
<dbReference type="InterPro" id="IPR016162">
    <property type="entry name" value="Ald_DH_N"/>
</dbReference>
<dbReference type="InterPro" id="IPR015590">
    <property type="entry name" value="Aldehyde_DH_dom"/>
</dbReference>
<dbReference type="InterPro" id="IPR005931">
    <property type="entry name" value="P5CDH/ALDH4A1"/>
</dbReference>
<dbReference type="InterPro" id="IPR050485">
    <property type="entry name" value="Proline_metab_enzyme"/>
</dbReference>
<dbReference type="NCBIfam" id="TIGR01236">
    <property type="entry name" value="D1pyr5carbox1"/>
    <property type="match status" value="1"/>
</dbReference>
<dbReference type="PANTHER" id="PTHR42862">
    <property type="entry name" value="DELTA-1-PYRROLINE-5-CARBOXYLATE DEHYDROGENASE 1, ISOFORM A-RELATED"/>
    <property type="match status" value="1"/>
</dbReference>
<dbReference type="PANTHER" id="PTHR42862:SF1">
    <property type="entry name" value="DELTA-1-PYRROLINE-5-CARBOXYLATE DEHYDROGENASE 2, ISOFORM A-RELATED"/>
    <property type="match status" value="1"/>
</dbReference>
<dbReference type="Pfam" id="PF00171">
    <property type="entry name" value="Aldedh"/>
    <property type="match status" value="1"/>
</dbReference>
<dbReference type="SUPFAM" id="SSF53720">
    <property type="entry name" value="ALDH-like"/>
    <property type="match status" value="1"/>
</dbReference>
<dbReference type="PROSITE" id="PS00070">
    <property type="entry name" value="ALDEHYDE_DEHYDR_CYS"/>
    <property type="match status" value="1"/>
</dbReference>
<dbReference type="PROSITE" id="PS00687">
    <property type="entry name" value="ALDEHYDE_DEHYDR_GLU"/>
    <property type="match status" value="1"/>
</dbReference>
<organism>
    <name type="scientific">Emericella nidulans (strain FGSC A4 / ATCC 38163 / CBS 112.46 / NRRL 194 / M139)</name>
    <name type="common">Aspergillus nidulans</name>
    <dbReference type="NCBI Taxonomy" id="227321"/>
    <lineage>
        <taxon>Eukaryota</taxon>
        <taxon>Fungi</taxon>
        <taxon>Dikarya</taxon>
        <taxon>Ascomycota</taxon>
        <taxon>Pezizomycotina</taxon>
        <taxon>Eurotiomycetes</taxon>
        <taxon>Eurotiomycetidae</taxon>
        <taxon>Eurotiales</taxon>
        <taxon>Aspergillaceae</taxon>
        <taxon>Aspergillus</taxon>
        <taxon>Aspergillus subgen. Nidulantes</taxon>
    </lineage>
</organism>
<accession>Q9P8I0</accession>
<accession>C8VP34</accession>
<accession>Q5BCJ7</accession>
<proteinExistence type="inferred from homology"/>
<keyword id="KW-0496">Mitochondrion</keyword>
<keyword id="KW-0520">NAD</keyword>
<keyword id="KW-0560">Oxidoreductase</keyword>
<keyword id="KW-0642">Proline metabolism</keyword>
<keyword id="KW-1185">Reference proteome</keyword>
<keyword id="KW-0809">Transit peptide</keyword>
<name>PUT2_EMENI</name>
<comment type="catalytic activity">
    <reaction>
        <text>L-glutamate 5-semialdehyde + NAD(+) + H2O = L-glutamate + NADH + 2 H(+)</text>
        <dbReference type="Rhea" id="RHEA:30235"/>
        <dbReference type="ChEBI" id="CHEBI:15377"/>
        <dbReference type="ChEBI" id="CHEBI:15378"/>
        <dbReference type="ChEBI" id="CHEBI:29985"/>
        <dbReference type="ChEBI" id="CHEBI:57540"/>
        <dbReference type="ChEBI" id="CHEBI:57945"/>
        <dbReference type="ChEBI" id="CHEBI:58066"/>
        <dbReference type="EC" id="1.2.1.88"/>
    </reaction>
</comment>
<comment type="pathway">
    <text>Amino-acid degradation; L-proline degradation into L-glutamate; L-glutamate from L-proline: step 2/2.</text>
</comment>
<comment type="subcellular location">
    <subcellularLocation>
        <location>Mitochondrion matrix</location>
    </subcellularLocation>
</comment>
<comment type="similarity">
    <text evidence="5">Belongs to the aldehyde dehydrogenase family.</text>
</comment>
<protein>
    <recommendedName>
        <fullName>Delta-1-pyrroline-5-carboxylate dehydrogenase, mitochondrial</fullName>
        <shortName>P5C dehydrogenase</shortName>
        <ecNumber>1.2.1.88</ecNumber>
    </recommendedName>
    <alternativeName>
        <fullName>L-glutamate gamma-semialdehyde dehydrogenase</fullName>
    </alternativeName>
</protein>